<name>MLFA_ASPVC</name>
<reference key="1">
    <citation type="journal article" date="2018" name="Nat. Genet.">
        <title>Investigation of inter- and intraspecies variation through genome sequencing of Aspergillus section Nigri.</title>
        <authorList>
            <person name="Vesth T.C."/>
            <person name="Nybo J.L."/>
            <person name="Theobald S."/>
            <person name="Frisvad J.C."/>
            <person name="Larsen T.O."/>
            <person name="Nielsen K.F."/>
            <person name="Hoof J.B."/>
            <person name="Brandl J."/>
            <person name="Salamov A."/>
            <person name="Riley R."/>
            <person name="Gladden J.M."/>
            <person name="Phatale P."/>
            <person name="Nielsen M.T."/>
            <person name="Lyhne E.K."/>
            <person name="Kogle M.E."/>
            <person name="Strasser K."/>
            <person name="McDonnell E."/>
            <person name="Barry K."/>
            <person name="Clum A."/>
            <person name="Chen C."/>
            <person name="LaButti K."/>
            <person name="Haridas S."/>
            <person name="Nolan M."/>
            <person name="Sandor L."/>
            <person name="Kuo A."/>
            <person name="Lipzen A."/>
            <person name="Hainaut M."/>
            <person name="Drula E."/>
            <person name="Tsang A."/>
            <person name="Magnuson J.K."/>
            <person name="Henrissat B."/>
            <person name="Wiebenga A."/>
            <person name="Simmons B.A."/>
            <person name="Maekelae M.R."/>
            <person name="de Vries R.P."/>
            <person name="Grigoriev I.V."/>
            <person name="Mortensen U.H."/>
            <person name="Baker S.E."/>
            <person name="Andersen M.R."/>
        </authorList>
    </citation>
    <scope>NUCLEOTIDE SEQUENCE [LARGE SCALE GENOMIC DNA]</scope>
    <source>
        <strain>CBS 113365 / IMI 142717 / IBT 24658</strain>
    </source>
</reference>
<reference key="2">
    <citation type="journal article" date="2009" name="J. Antibiot.">
        <title>Solid-phase synthesis and biological activity of malformin C and its derivatives.</title>
        <authorList>
            <person name="Kojima Y."/>
            <person name="Sunazuka T."/>
            <person name="Nagai K."/>
            <person name="Hirose T."/>
            <person name="Namatame M."/>
            <person name="Ishiyama A."/>
            <person name="Otoguro K."/>
            <person name="Omura S."/>
        </authorList>
    </citation>
    <scope>BIOTECHNOLOGY</scope>
</reference>
<reference key="3">
    <citation type="journal article" date="2015" name="PLoS ONE">
        <title>Study of malformin C, a fungal source cyclic pentapeptide, as an anti-cancer drug.</title>
        <authorList>
            <person name="Wang J."/>
            <person name="Jiang Z."/>
            <person name="Lam W."/>
            <person name="Gullen E.A."/>
            <person name="Yu Z."/>
            <person name="Wei Y."/>
            <person name="Wang L."/>
            <person name="Zeiss C."/>
            <person name="Beck A."/>
            <person name="Cheng E.C."/>
            <person name="Wu C."/>
            <person name="Cheng Y.C."/>
            <person name="Zhang Y."/>
        </authorList>
    </citation>
    <scope>BIOTECHNOLOGY</scope>
</reference>
<reference key="4">
    <citation type="journal article" date="2016" name="Cancer Chemother. Pharmacol.">
        <title>Malformin A1 promotes cell death through induction of apoptosis, necrosis and autophagy in prostate cancer cells.</title>
        <authorList>
            <person name="Liu Y."/>
            <person name="Wang M."/>
            <person name="Wang D."/>
            <person name="Li X."/>
            <person name="Wang W."/>
            <person name="Lou H."/>
            <person name="Yuan H."/>
        </authorList>
    </citation>
    <scope>BIOTECHNOLOGY</scope>
</reference>
<reference key="5">
    <citation type="journal article" date="2017" name="Int. J. Oncol.">
        <title>Malformin A1 treatment alters invasive and oncogenic phenotypes of human colorectal cancer cells through stimulation of the p38 signaling pathway.</title>
        <authorList>
            <person name="Park S.Y."/>
            <person name="Oh H.H."/>
            <person name="Park Y.L."/>
            <person name="Yu H.M."/>
            <person name="Myung D.S."/>
            <person name="Cho S.B."/>
            <person name="Lee W.S."/>
            <person name="Park D."/>
            <person name="Joo Y.E."/>
        </authorList>
    </citation>
    <scope>BIOTECHNOLOGY</scope>
</reference>
<reference key="6">
    <citation type="journal article" date="2018" name="Sci. Rep.">
        <title>Uncovering secondary metabolite evolution and biosynthesis using gene cluster networks and genetic dereplication.</title>
        <authorList>
            <person name="Theobald S."/>
            <person name="Vesth T.C."/>
            <person name="Rendsvig J.K."/>
            <person name="Nielsen K.F."/>
            <person name="Riley R."/>
            <person name="de Abreu L.M."/>
            <person name="Salamov A."/>
            <person name="Frisvad J.C."/>
            <person name="Larsen T.O."/>
            <person name="Andersen M.R."/>
            <person name="Hoof J.B."/>
        </authorList>
    </citation>
    <scope>IDENTIFICATION</scope>
    <scope>FUNCTION</scope>
    <scope>PATHWAY</scope>
</reference>
<feature type="chain" id="PRO_0000446440" description="Malformin synthetase mlfA">
    <location>
        <begin position="1"/>
        <end position="5104"/>
    </location>
</feature>
<feature type="domain" description="Carrier 1" evidence="2">
    <location>
        <begin position="757"/>
        <end position="830"/>
    </location>
</feature>
<feature type="domain" description="Carrier 2" evidence="2">
    <location>
        <begin position="1854"/>
        <end position="1931"/>
    </location>
</feature>
<feature type="domain" description="Carrier 3" evidence="2">
    <location>
        <begin position="3032"/>
        <end position="3108"/>
    </location>
</feature>
<feature type="domain" description="Carrier 4" evidence="2">
    <location>
        <begin position="4578"/>
        <end position="4654"/>
    </location>
</feature>
<feature type="region of interest" description="Adenylation 1" evidence="1">
    <location>
        <begin position="225"/>
        <end position="616"/>
    </location>
</feature>
<feature type="region of interest" description="Condensation 1" evidence="1">
    <location>
        <begin position="868"/>
        <end position="1299"/>
    </location>
</feature>
<feature type="region of interest" description="Adenylation 2" evidence="1">
    <location>
        <begin position="1327"/>
        <end position="1716"/>
    </location>
</feature>
<feature type="region of interest" description="Disordered" evidence="3">
    <location>
        <begin position="1928"/>
        <end position="1961"/>
    </location>
</feature>
<feature type="region of interest" description="Disordered" evidence="3">
    <location>
        <begin position="1998"/>
        <end position="2025"/>
    </location>
</feature>
<feature type="region of interest" description="Condensation 2" evidence="1">
    <location>
        <begin position="2066"/>
        <end position="2481"/>
    </location>
</feature>
<feature type="region of interest" description="Adenylation 3" evidence="1">
    <location>
        <begin position="2504"/>
        <end position="2896"/>
    </location>
</feature>
<feature type="region of interest" description="Condensation 3" evidence="1">
    <location>
        <begin position="3125"/>
        <end position="3590"/>
    </location>
</feature>
<feature type="region of interest" description="Condensation 4" evidence="1">
    <location>
        <begin position="3611"/>
        <end position="4029"/>
    </location>
</feature>
<feature type="region of interest" description="Adenylation 4" evidence="1">
    <location>
        <begin position="4054"/>
        <end position="4444"/>
    </location>
</feature>
<feature type="region of interest" description="Condensation 5" evidence="1">
    <location>
        <begin position="4691"/>
        <end position="5018"/>
    </location>
</feature>
<feature type="compositionally biased region" description="Low complexity" evidence="3">
    <location>
        <begin position="1934"/>
        <end position="1958"/>
    </location>
</feature>
<feature type="compositionally biased region" description="Low complexity" evidence="3">
    <location>
        <begin position="2003"/>
        <end position="2013"/>
    </location>
</feature>
<feature type="modified residue" description="O-(pantetheine 4'-phosphoryl)serine" evidence="2">
    <location>
        <position position="791"/>
    </location>
</feature>
<feature type="modified residue" description="O-(pantetheine 4'-phosphoryl)serine" evidence="2">
    <location>
        <position position="1891"/>
    </location>
</feature>
<feature type="modified residue" description="O-(pantetheine 4'-phosphoryl)serine" evidence="2">
    <location>
        <position position="3069"/>
    </location>
</feature>
<feature type="modified residue" description="O-(pantetheine 4'-phosphoryl)serine" evidence="2">
    <location>
        <position position="4615"/>
    </location>
</feature>
<sequence length="5104" mass="561642">MSRFSCIFPTLTDGYVPNPDHTRAAGRRTYTIDLSGWKAPGSEKESHILAAWALVLSSYVGTDEVAFYVVPVTGPDTTALAELKVEGDMSRQSLTCAAEQLLHPALVGAGQVSRETANTIITFANDIESLFVTQTEESFLSLQVYRNEQGHISLSLVYYLSLLTDAQAANVGTAMAQALAEVGTCDNDRLIKDLNLMSPAHLEHIWRFNANVPGIWEECFHDVIERHAVNRPHSLAVDAWDTKLTYADLVREARLLAAYLQQRGVRPGSVVPISFERSGAALVAMLAVSKAGGAFVSVPPNLPAGRLDAILDVIEAPFVVTWTKYESFWAERLPTLPIDNYPKPAADATVEALGKPEDLFYVIFTSGSTGRPKGCMLSHSNWLNGALRNAPSWKYGPQSRVLQMLSHTFDMSLLEICTSLGSGACVCVPRTEEIETSISDAINRWQVNHVIMTPSLARALRPDDVPGLKTMCLGGEAFPKEIVTMWSERINLWQFYGPSECSINSSSRPITRPDADPLNIGPPNSAACWVVDVQDYNKLVPVGAIGELLVSGPIVGMGYLKNPVKTAEAFLDEVEFVAKDDPQFGGFRFYRTGDLVRWNSDGTITFCGRADTQVKLNGQRLELAEVEYQLGLEAGVQYAIAMAPQAGLCKNNLLAILTVKGTSTGNQDTAADEIPLLDRRDPIVQETVKKLRSQLQHALPRYMVPTIWAFVGRLPMSASGKIDRVQLRDWVQKMSQETFDAITGRSLEAEGHVLGLSRLEQEIQLAWAEALGLSAAEVGLQQPFVALGGDSIKALDAVARCRACQIKISMVHILSCEGVREAASLAEVQETPAQQVAEMAVDYSNLWTRLSNDYDLGKLGVTRVDEVEDVFPCTTMQEGMFLGQIRRPGAYHMRFFHRVQLKGGCLPTVERIQQAWASLVERHPSLRTVFVDDLSPEAIYHSIVLRSVPMELRMREVPRDLSAEAALAMFTEELVPFRANAPLHRMLLLTCRGRVPYLMLEISHVIMDGYALSVFRREFIRACSSSPPLPRGPDYRMFANYHRTRQTDESTGYWTNYLADCVPCHIPTHAVSAPSDAPPEWPRTLQRRDFGVDNSAAFLQRCKERQVTLACAIRAAWALVLRAYTQSKDVCFGYVSSGRNVPVPEVEAIFGLCLSMQVCRARLSEASTIASLARRIQEDYVASLPFQHYPLAEAQRGLKQTHGQGLFNTAISMEWVPPSVEDEDALLDLEEIREQDDPTEYDIAISVDVHEGHIKLGFLYWPNLTDFEITHLAEALRGAMNCFAFQPDGALNTLSLLQASDVCSALADGPTLLPLEAVRGNAVSMIDRWVTRQPEGAAIDGWDGSLSYKELHEQSSWVARNLLHQGVQLGDRVLVCADRSSRTVAIVLGIVRAGCVLVLSNPTDPEKRLQWLAKKCDAALVVADPTYEERFATSGSRILSTTSVCAPAAWDYEFPALDEHDLISILFTSGSTGTPKGILMEHGALATSVLLGHGRTLRFSRHTRMLHFASLTFDAALAEIFTTLAHGGCICVPCEEDRLSDVPGCISSFAVNTAMLTPSVGRLLDPGALPTLKTLIMVGEPMSRLDVERFAPVLDLYNGAGPTETSIMVTIAGPMKPTDEPVNLGFAVAGVRLWVTEAENPNRLAPLGAVGELIVEGRLVTRGYLDDPARTQEAFLPTLPWLPSQHALYRTGDLVRYAEDGSLRYMGRKDTQVKLRGQRIELQEVEYHLRKSLQQAQIVVEMVVPAGKMRAQASLVAFVSGLTAADVESSSACNFGGTIPISQIVLSKSTFQALGEVLPRHMIPSVYYALDTIPLSLNGKADRRRLREMGSALLASSAAHKNTIEGMRESVKWTPASELERTLLELWAATLALDAETIHGDDSFFELGGDSVSAMKLVATARDKFKLSLSVPQMFRYPTIRQLAAEFGGPAGQSASSASSTTEERFTFSTPDDSSTNDGVDDDFLQLATAQLAQLAQEKGKKVDIAALLKQLQGGSFTNKTPSVSSSSSSSSSSEKKKKAAKVDSQAEAAAPVPVQFSLLDGGAEFLEKVREQAVEQCKVPHEDIEDIYPATPLQEGMMALTARTPGVYTTTLTCDLSEEVDLARLHYAWGKAAEAHPILRTRLILTDNNTAVQVVQRAEELPWDTYSLHDGDVLPDLTSNMTFGSPLLRLAVVHRQNQPRMLLVAIHHALYDGWSMPLLKQAVEDAYHGRDLRPQPFTPFIEYVIVGKQAAQDFWTTHLDSFAGGVFPNFPSIDYQINPTERRTRSMTLPTVTPRAQYTMATKIQAAWAVTVSRYAEANDIVFGTVSTGRSAPVPAIDRMVGPTITTVPVRISLSNQAERVNSLLQRVQDDSWKKMDHGHLGLQHIRRLGESAAAACSFQTLLVIQPREQPDTKYRSTLLSGLQDVAELKGVDTYPLMLVCEPDGARLHLTAVFDPAVLNGITLERMLAHWELVLIQLWNEPDMAVIELDTVSYSDKEALMRWNTGETIPNGCAHDAVSEWSVRTPHAPAVCAWDGEWTYEELERCSSLIASQILAHGVSSGDFVALYHEKSRWAAAGILAVFKAGAILITLDPAHPTDRIKDILDQARPRLILTSQSLLDVARNFETPLLSVQFAASKPLPEGWSSLPTISSTQAAYTPFTSGSTGRPKGIPLDHRGLAASTASIARSCLLRPASRVLHFASFAFDASMMEHLIAWHAGGCLCIPDDTARQTDLAKCIRGFNVTWAFLTPSCLRLITPDDVPSLQALGLGGESMTSEDITIWGPRLRQIVQLYGPAECCIVAALTPVTKPSENRLIGRPNACRCWVVDSQNLDRMAPIGAVGELVIEGITVGRGYINDPDRTNRAFIRHPKWLQTLYPDDQESKRLYRTGDLVRYAGVDGKLVFIGRRDGQLKLHGQRIELADVEAHLRPLIPGTQKVVVEMVHSADNQNPILAAFLEEMSASQKPTEREVGLLHPSQSQCDQDVKAIDSALSRTVPQYMIPSMYLHISRLPLSASGKLNRRHLREMVAELPRQRLNEYAAGSGLSAPDRPVTSQEREMRAIWARVLSLDPNTIGVNDDFFRIGGDSISGMQVATKCNAAGIHITSADLFRHRNIEQLICHLNTIRTTNCASVSLPTEPVDKWVALAPIQQLFFEVAPEGPNHFNQSLLLHTSRRVSVEELARGLDILVGRHSMLRARFCRKDSGQWFQQVKSLDYEPASGLYRLAAHNQITRESLPTLFTAAQMALSIQDGPLLNVDLVELEDGSQLVYLVAHHLIIDLVSWRILHGELEEYLQTGSLSSATGSVPFLTWSQLQAQYSAEDLTPARALPDFQEANDDFDVTRYWGISSELNTFGQTSISRFTLDRTVTDILFGNANKVMDTRPVEILQAALWYSCNQALTDRPRPSIYVEGHGREPWTDSINVSGTVGWFTTMSPLVSTPWDHLSRKPMRDFVDALSYIKDQRRRIPANGWAYFTSRYLNDEGRIAYGRTKPVVEFLFNYMGQYQEMNRDDAILQLAGDDIQSGTGASDIADNVPRFSLIDVSAFTANGCLTFEFIFPELLQQDARLEQCIKECERTLVAAASSLSEEGPRKTLTDFPLMSALTYDQLSQCLNHALPSIGLRAQDVLNIYPCSPVQQGMLLAQLRDRQAYQQRFRFRIKSQGPTDQLTLKKVKDAWTQVINRHDILRTLLLPVSDHSHFDQVVMVPGSLQHLVRISGTDANPTKDLSHTINITSDSSGTIICEWNVSHALVDAMSIAVIQREVDQELEGALGQHQAPPQYVDYIQWLSLKDNTEAQAYWQRYLKGVEPCLFPKLTSSSEVNPEGTISAIRATWTRDARMDELCHKHAITLTNIFHIVWAVVLGAYVGTDEVCFGYTTLGRDVPVDGVETMVGPLVNVLATTVHLQQDRSILNALLTHQSHLTNSLQHQHHALADVYSSLGLVGSQLFNTIVSLQDMSHFDAPDEQRTRLEMLPANDVSEYNVTLNIGVDQSSIQLVCSYQSASLSAEHANALLRTASHVLREILRDPTQEFCELEVISPECKEQLVKWNAGMLAPTDEYIHEKIQGQCRIHSSREAVCAWDGTFTYAEIDYLSSRLAARLISMGVTSEDIIPIYSPKSRWTVIAILGVLKTGAAFMLLETSHPVARLQAICDQVKTDMIITPASHAVSAANLAPILVVLDNITSSTQEKSDPLPAVGIPPAGEALAYLIFTSGSTGNPKGVMITHENLCSNASIITTSVNMTSDSRVLQFASHAFDGCILELLGALIAGACLIIPSESENKEDLAGCIERMDVTWALLTPSVARILKPETLPRLSNLVLGGEPIAASDLDMWRGHVQVVCAYGPTETTIVASTTSPSTFPADGKDIGLPNGSSLWIVDRWNYHKLSPLGATGELLIEGPNVSQGYLGDPEKTSNAFPDAPRWLSRLRKSPTRLYRTGDLARFDTSTGTIRFVGRKDNQIKFHGQRIELGEIEHHAQLAFSSASTVIVDLITPEQPQQPYIVAFVHQPDANTEATGTIDTILLPPSESFRADALAAQNKMHKRLPHYMVPAVFLPLHRLPLSATGKADRKRLRQCALALSSSELSAYRATASTKRMPSTAAERKMQDLVATVLGRGPAEIGMDDSFFYLGGDSVQAMRLVAEGRQQGLALSLRAIFDSPCLGDLSDQARSLIEDNQRISTASSAGLRDNCDQIDKIVATNSLNKTDVADVLPTTSFQRHWLDGQLKSYIVVDIPGPIDPARLFRAMHRVVEAHPILRVLFVPYETTTLQVILRTAAAIINADLSTTTVEDICRQDADAQVAPGVPYLRVILATQGQADHKIIMRLSHAQYDAVSLSLLMKDLSHAYANDTHPLPSSQFPRFNDYITYQQAQRADPMATTFWRNLLQDVPLTYLNLQPAEPSTSNGTPITLTRDIYIAAFPSLPNGITTATAVKAAWSLVLAQKSDSAAVIFGQVVHGRAIALPGVEGIVGPCANITPVVARLGLQTTGLDLMQSLQDQHRSAMPYEMVDLDDALAYTKKSEAGRKGLQTIVQHQNNVMVDDMEFSLGEVKCGVDVRAVDHVPKEVWVYSSVNEKRPGMLEVKIMSSTLVIGEEVAEELIGLLVEKIMGLLRHPEGVCLNGPC</sequence>
<evidence type="ECO:0000255" key="1"/>
<evidence type="ECO:0000255" key="2">
    <source>
        <dbReference type="PROSITE-ProRule" id="PRU00258"/>
    </source>
</evidence>
<evidence type="ECO:0000256" key="3">
    <source>
        <dbReference type="SAM" id="MobiDB-lite"/>
    </source>
</evidence>
<evidence type="ECO:0000269" key="4">
    <source>
    </source>
</evidence>
<evidence type="ECO:0000269" key="5">
    <source>
    </source>
</evidence>
<evidence type="ECO:0000269" key="6">
    <source>
    </source>
</evidence>
<evidence type="ECO:0000269" key="7">
    <source>
    </source>
</evidence>
<evidence type="ECO:0000269" key="8">
    <source>
    </source>
</evidence>
<evidence type="ECO:0000303" key="9">
    <source>
    </source>
</evidence>
<evidence type="ECO:0000305" key="10"/>
<evidence type="ECO:0000305" key="11">
    <source>
    </source>
</evidence>
<gene>
    <name evidence="9" type="primary">mlfA</name>
    <name type="ORF">BO88DRAFT_464700</name>
</gene>
<proteinExistence type="evidence at protein level"/>
<keyword id="KW-0436">Ligase</keyword>
<keyword id="KW-0596">Phosphopantetheine</keyword>
<keyword id="KW-0597">Phosphoprotein</keyword>
<keyword id="KW-0677">Repeat</keyword>
<protein>
    <recommendedName>
        <fullName evidence="9">Malformin synthetase mlfA</fullName>
        <ecNumber evidence="8">6.3.2.-</ecNumber>
    </recommendedName>
    <alternativeName>
        <fullName evidence="9">Malformin biosynthesis cluster protein A</fullName>
    </alternativeName>
    <alternativeName>
        <fullName evidence="9">Nonribosomal peptide synthetase mlfA</fullName>
    </alternativeName>
</protein>
<organism>
    <name type="scientific">Aspergillus vadensis (strain CBS 113365 / IMI 142717 / IBT 24658)</name>
    <dbReference type="NCBI Taxonomy" id="1448311"/>
    <lineage>
        <taxon>Eukaryota</taxon>
        <taxon>Fungi</taxon>
        <taxon>Dikarya</taxon>
        <taxon>Ascomycota</taxon>
        <taxon>Pezizomycotina</taxon>
        <taxon>Eurotiomycetes</taxon>
        <taxon>Eurotiomycetidae</taxon>
        <taxon>Eurotiales</taxon>
        <taxon>Aspergillaceae</taxon>
        <taxon>Aspergillus</taxon>
        <taxon>Aspergillus subgen. Circumdati</taxon>
    </lineage>
</organism>
<comment type="function">
    <text evidence="8 11">Nonribosomal peptide synthetase; part of the gene cluster that mediates the biosynthesis of malformins, cyclic pentapeptides with a disulfide bond between 2 consecutive cysteins, that show potential anti-tumor as well as antimalarial and antitrypanosomal properties (PubMed:30560908). The nonribosomal peptide synthetase mlfA is responsible of the formation of the cyclic pentapeptide (Probable). The malformin biosynthesis clusters in malformin-producing fungi also contain enzymes involved in the formation of the disulfide bond between the two consecutive cysteins within malformins, in addition to additional tailoring enzymes such as methyltransferases or oxidoreductases. They are also composed of up to 4 major facilitator superfamily transporters, and transcription factors probably involved in the regulation of the expression of those clusters (Probable).</text>
</comment>
<comment type="pathway">
    <text evidence="11">Secondary metabolite biosynthesis.</text>
</comment>
<comment type="domain">
    <text evidence="11">NRP synthetases are composed of discrete domains (adenylation (A), thiolation (T) or peptidyl carrier protein (PCP) and condensation (C) domains) which when grouped together are referred to as a single module. Each module is responsible for the recognition (via the A domain) and incorporation of a single amino acid into the growing peptide product. Thus, an NRP synthetase is generally composed of one or more modules and can terminate in a thioesterase domain (TE) that releases the newly synthesized peptide from the enzyme. Occasionally, epimerase (E) domains (responsible for L- to D- amino acid conversion) are present within the NRP synthetase. MlfA has the following architecture: A-T-C-A-T-C-A-T-C-C-A-T-C, with the functions of the five condensation domains during malformin biosynthesis being DL-joining (epimerizing subtype), LL-joining, epimerization, DL-joining and cyclizing domain, respectively.</text>
</comment>
<comment type="biotechnology">
    <text evidence="4 5 6 7">Malformins show anti-tumor properties against human colorectal and prostate cancer cells by the inhibition of proliferation and induction of apoptosis through the activation of the p38 signaling pathway (PubMed:26540166, PubMed:26645406, PubMed:28713983). Malformin C has also been shown to exhibit potent antimalarial and antitrypanosomal properties (PubMed:19876076).</text>
</comment>
<comment type="similarity">
    <text evidence="10">Belongs to the NRP synthetase family.</text>
</comment>
<accession>A0A319BQC1</accession>
<dbReference type="EC" id="6.3.2.-" evidence="8"/>
<dbReference type="EMBL" id="KZ821628">
    <property type="protein sequence ID" value="PYH67913.1"/>
    <property type="molecule type" value="Genomic_DNA"/>
</dbReference>
<dbReference type="SMR" id="A0A319BQC1"/>
<dbReference type="OrthoDB" id="416786at2759"/>
<dbReference type="Proteomes" id="UP000248405">
    <property type="component" value="Unassembled WGS sequence"/>
</dbReference>
<dbReference type="GO" id="GO:0005737">
    <property type="term" value="C:cytoplasm"/>
    <property type="evidence" value="ECO:0007669"/>
    <property type="project" value="TreeGrafter"/>
</dbReference>
<dbReference type="GO" id="GO:0016874">
    <property type="term" value="F:ligase activity"/>
    <property type="evidence" value="ECO:0007669"/>
    <property type="project" value="UniProtKB-KW"/>
</dbReference>
<dbReference type="GO" id="GO:0031177">
    <property type="term" value="F:phosphopantetheine binding"/>
    <property type="evidence" value="ECO:0007669"/>
    <property type="project" value="InterPro"/>
</dbReference>
<dbReference type="GO" id="GO:0043041">
    <property type="term" value="P:amino acid activation for nonribosomal peptide biosynthetic process"/>
    <property type="evidence" value="ECO:0007669"/>
    <property type="project" value="TreeGrafter"/>
</dbReference>
<dbReference type="GO" id="GO:0044550">
    <property type="term" value="P:secondary metabolite biosynthetic process"/>
    <property type="evidence" value="ECO:0007669"/>
    <property type="project" value="TreeGrafter"/>
</dbReference>
<dbReference type="CDD" id="cd05918">
    <property type="entry name" value="A_NRPS_SidN3_like"/>
    <property type="match status" value="4"/>
</dbReference>
<dbReference type="CDD" id="cd19542">
    <property type="entry name" value="CT_NRPS-like"/>
    <property type="match status" value="2"/>
</dbReference>
<dbReference type="CDD" id="cd19534">
    <property type="entry name" value="E_NRPS"/>
    <property type="match status" value="1"/>
</dbReference>
<dbReference type="CDD" id="cd19545">
    <property type="entry name" value="FUM14_C_NRPS-like"/>
    <property type="match status" value="1"/>
</dbReference>
<dbReference type="FunFam" id="3.30.559.10:FF:000016">
    <property type="entry name" value="Nonribosomal peptide synthase Pes1"/>
    <property type="match status" value="1"/>
</dbReference>
<dbReference type="FunFam" id="3.30.559.30:FF:000002">
    <property type="entry name" value="Nonribosomal peptide synthase Pes1"/>
    <property type="match status" value="1"/>
</dbReference>
<dbReference type="FunFam" id="3.30.300.30:FF:000015">
    <property type="entry name" value="Nonribosomal peptide synthase SidD"/>
    <property type="match status" value="4"/>
</dbReference>
<dbReference type="FunFam" id="3.30.559.30:FF:000003">
    <property type="entry name" value="Nonribosomal peptide synthase SidD"/>
    <property type="match status" value="1"/>
</dbReference>
<dbReference type="FunFam" id="1.10.1200.10:FF:000005">
    <property type="entry name" value="Nonribosomal peptide synthetase 1"/>
    <property type="match status" value="1"/>
</dbReference>
<dbReference type="Gene3D" id="3.30.300.30">
    <property type="match status" value="4"/>
</dbReference>
<dbReference type="Gene3D" id="1.10.1200.10">
    <property type="entry name" value="ACP-like"/>
    <property type="match status" value="4"/>
</dbReference>
<dbReference type="Gene3D" id="3.30.559.10">
    <property type="entry name" value="Chloramphenicol acetyltransferase-like domain"/>
    <property type="match status" value="5"/>
</dbReference>
<dbReference type="Gene3D" id="3.40.50.12780">
    <property type="entry name" value="N-terminal domain of ligase-like"/>
    <property type="match status" value="4"/>
</dbReference>
<dbReference type="Gene3D" id="3.30.559.30">
    <property type="entry name" value="Nonribosomal peptide synthetase, condensation domain"/>
    <property type="match status" value="6"/>
</dbReference>
<dbReference type="InterPro" id="IPR010071">
    <property type="entry name" value="AA_adenyl_dom"/>
</dbReference>
<dbReference type="InterPro" id="IPR036736">
    <property type="entry name" value="ACP-like_sf"/>
</dbReference>
<dbReference type="InterPro" id="IPR045851">
    <property type="entry name" value="AMP-bd_C_sf"/>
</dbReference>
<dbReference type="InterPro" id="IPR020845">
    <property type="entry name" value="AMP-binding_CS"/>
</dbReference>
<dbReference type="InterPro" id="IPR000873">
    <property type="entry name" value="AMP-dep_synth/lig_dom"/>
</dbReference>
<dbReference type="InterPro" id="IPR042099">
    <property type="entry name" value="ANL_N_sf"/>
</dbReference>
<dbReference type="InterPro" id="IPR023213">
    <property type="entry name" value="CAT-like_dom_sf"/>
</dbReference>
<dbReference type="InterPro" id="IPR001242">
    <property type="entry name" value="Condensatn"/>
</dbReference>
<dbReference type="InterPro" id="IPR020806">
    <property type="entry name" value="PKS_PP-bd"/>
</dbReference>
<dbReference type="InterPro" id="IPR009081">
    <property type="entry name" value="PP-bd_ACP"/>
</dbReference>
<dbReference type="InterPro" id="IPR006162">
    <property type="entry name" value="Ppantetheine_attach_site"/>
</dbReference>
<dbReference type="NCBIfam" id="TIGR01733">
    <property type="entry name" value="AA-adenyl-dom"/>
    <property type="match status" value="4"/>
</dbReference>
<dbReference type="NCBIfam" id="NF003417">
    <property type="entry name" value="PRK04813.1"/>
    <property type="match status" value="4"/>
</dbReference>
<dbReference type="PANTHER" id="PTHR45527">
    <property type="entry name" value="NONRIBOSOMAL PEPTIDE SYNTHETASE"/>
    <property type="match status" value="1"/>
</dbReference>
<dbReference type="PANTHER" id="PTHR45527:SF11">
    <property type="entry name" value="NONRIBOSOMAL PEPTIDE SYNTHETASE 5"/>
    <property type="match status" value="1"/>
</dbReference>
<dbReference type="Pfam" id="PF00501">
    <property type="entry name" value="AMP-binding"/>
    <property type="match status" value="4"/>
</dbReference>
<dbReference type="Pfam" id="PF00668">
    <property type="entry name" value="Condensation"/>
    <property type="match status" value="5"/>
</dbReference>
<dbReference type="Pfam" id="PF00550">
    <property type="entry name" value="PP-binding"/>
    <property type="match status" value="4"/>
</dbReference>
<dbReference type="SMART" id="SM00823">
    <property type="entry name" value="PKS_PP"/>
    <property type="match status" value="3"/>
</dbReference>
<dbReference type="SMART" id="SM01294">
    <property type="entry name" value="PKS_PP_betabranch"/>
    <property type="match status" value="1"/>
</dbReference>
<dbReference type="SUPFAM" id="SSF56801">
    <property type="entry name" value="Acetyl-CoA synthetase-like"/>
    <property type="match status" value="4"/>
</dbReference>
<dbReference type="SUPFAM" id="SSF47336">
    <property type="entry name" value="ACP-like"/>
    <property type="match status" value="4"/>
</dbReference>
<dbReference type="SUPFAM" id="SSF52777">
    <property type="entry name" value="CoA-dependent acyltransferases"/>
    <property type="match status" value="11"/>
</dbReference>
<dbReference type="PROSITE" id="PS00455">
    <property type="entry name" value="AMP_BINDING"/>
    <property type="match status" value="3"/>
</dbReference>
<dbReference type="PROSITE" id="PS50075">
    <property type="entry name" value="CARRIER"/>
    <property type="match status" value="4"/>
</dbReference>
<dbReference type="PROSITE" id="PS00012">
    <property type="entry name" value="PHOSPHOPANTETHEINE"/>
    <property type="match status" value="1"/>
</dbReference>